<evidence type="ECO:0000255" key="1">
    <source>
        <dbReference type="PROSITE-ProRule" id="PRU00340"/>
    </source>
</evidence>
<gene>
    <name type="ordered locus">MJ1325</name>
</gene>
<feature type="chain" id="PRO_0000160634" description="Uncharacterized HTH-type transcriptional regulator MJ1325">
    <location>
        <begin position="1"/>
        <end position="89"/>
    </location>
</feature>
<feature type="domain" description="HTH arsR-type" evidence="1">
    <location>
        <begin position="1"/>
        <end position="89"/>
    </location>
</feature>
<name>Y1325_METJA</name>
<reference key="1">
    <citation type="journal article" date="1996" name="Science">
        <title>Complete genome sequence of the methanogenic archaeon, Methanococcus jannaschii.</title>
        <authorList>
            <person name="Bult C.J."/>
            <person name="White O."/>
            <person name="Olsen G.J."/>
            <person name="Zhou L."/>
            <person name="Fleischmann R.D."/>
            <person name="Sutton G.G."/>
            <person name="Blake J.A."/>
            <person name="FitzGerald L.M."/>
            <person name="Clayton R.A."/>
            <person name="Gocayne J.D."/>
            <person name="Kerlavage A.R."/>
            <person name="Dougherty B.A."/>
            <person name="Tomb J.-F."/>
            <person name="Adams M.D."/>
            <person name="Reich C.I."/>
            <person name="Overbeek R."/>
            <person name="Kirkness E.F."/>
            <person name="Weinstock K.G."/>
            <person name="Merrick J.M."/>
            <person name="Glodek A."/>
            <person name="Scott J.L."/>
            <person name="Geoghagen N.S.M."/>
            <person name="Weidman J.F."/>
            <person name="Fuhrmann J.L."/>
            <person name="Nguyen D."/>
            <person name="Utterback T.R."/>
            <person name="Kelley J.M."/>
            <person name="Peterson J.D."/>
            <person name="Sadow P.W."/>
            <person name="Hanna M.C."/>
            <person name="Cotton M.D."/>
            <person name="Roberts K.M."/>
            <person name="Hurst M.A."/>
            <person name="Kaine B.P."/>
            <person name="Borodovsky M."/>
            <person name="Klenk H.-P."/>
            <person name="Fraser C.M."/>
            <person name="Smith H.O."/>
            <person name="Woese C.R."/>
            <person name="Venter J.C."/>
        </authorList>
    </citation>
    <scope>NUCLEOTIDE SEQUENCE [LARGE SCALE GENOMIC DNA]</scope>
    <source>
        <strain>ATCC 43067 / DSM 2661 / JAL-1 / JCM 10045 / NBRC 100440</strain>
    </source>
</reference>
<dbReference type="EMBL" id="L77117">
    <property type="protein sequence ID" value="AAB99335.1"/>
    <property type="molecule type" value="Genomic_DNA"/>
</dbReference>
<dbReference type="PIR" id="D64465">
    <property type="entry name" value="D64465"/>
</dbReference>
<dbReference type="RefSeq" id="WP_010870842.1">
    <property type="nucleotide sequence ID" value="NC_000909.1"/>
</dbReference>
<dbReference type="SMR" id="Q58721"/>
<dbReference type="FunCoup" id="Q58721">
    <property type="interactions" value="3"/>
</dbReference>
<dbReference type="STRING" id="243232.MJ_1325"/>
<dbReference type="PaxDb" id="243232-MJ_1325"/>
<dbReference type="EnsemblBacteria" id="AAB99335">
    <property type="protein sequence ID" value="AAB99335"/>
    <property type="gene ID" value="MJ_1325"/>
</dbReference>
<dbReference type="KEGG" id="mja:MJ_1325"/>
<dbReference type="eggNOG" id="arCOG01680">
    <property type="taxonomic scope" value="Archaea"/>
</dbReference>
<dbReference type="HOGENOM" id="CLU_097806_3_5_2"/>
<dbReference type="InParanoid" id="Q58721"/>
<dbReference type="OrthoDB" id="46231at2157"/>
<dbReference type="PhylomeDB" id="Q58721"/>
<dbReference type="Proteomes" id="UP000000805">
    <property type="component" value="Chromosome"/>
</dbReference>
<dbReference type="GO" id="GO:0003677">
    <property type="term" value="F:DNA binding"/>
    <property type="evidence" value="ECO:0007669"/>
    <property type="project" value="UniProtKB-KW"/>
</dbReference>
<dbReference type="GO" id="GO:0003700">
    <property type="term" value="F:DNA-binding transcription factor activity"/>
    <property type="evidence" value="ECO:0007669"/>
    <property type="project" value="InterPro"/>
</dbReference>
<dbReference type="CDD" id="cd00090">
    <property type="entry name" value="HTH_ARSR"/>
    <property type="match status" value="1"/>
</dbReference>
<dbReference type="Gene3D" id="1.10.10.10">
    <property type="entry name" value="Winged helix-like DNA-binding domain superfamily/Winged helix DNA-binding domain"/>
    <property type="match status" value="1"/>
</dbReference>
<dbReference type="InterPro" id="IPR011991">
    <property type="entry name" value="ArsR-like_HTH"/>
</dbReference>
<dbReference type="InterPro" id="IPR001845">
    <property type="entry name" value="HTH_ArsR_DNA-bd_dom"/>
</dbReference>
<dbReference type="InterPro" id="IPR051011">
    <property type="entry name" value="Metal_resp_trans_reg"/>
</dbReference>
<dbReference type="InterPro" id="IPR036388">
    <property type="entry name" value="WH-like_DNA-bd_sf"/>
</dbReference>
<dbReference type="InterPro" id="IPR036390">
    <property type="entry name" value="WH_DNA-bd_sf"/>
</dbReference>
<dbReference type="NCBIfam" id="NF033788">
    <property type="entry name" value="HTH_metalloreg"/>
    <property type="match status" value="1"/>
</dbReference>
<dbReference type="PANTHER" id="PTHR43132">
    <property type="entry name" value="ARSENICAL RESISTANCE OPERON REPRESSOR ARSR-RELATED"/>
    <property type="match status" value="1"/>
</dbReference>
<dbReference type="PANTHER" id="PTHR43132:SF2">
    <property type="entry name" value="ARSENICAL RESISTANCE OPERON REPRESSOR ARSR-RELATED"/>
    <property type="match status" value="1"/>
</dbReference>
<dbReference type="Pfam" id="PF01022">
    <property type="entry name" value="HTH_5"/>
    <property type="match status" value="1"/>
</dbReference>
<dbReference type="PRINTS" id="PR00778">
    <property type="entry name" value="HTHARSR"/>
</dbReference>
<dbReference type="SMART" id="SM00418">
    <property type="entry name" value="HTH_ARSR"/>
    <property type="match status" value="1"/>
</dbReference>
<dbReference type="SUPFAM" id="SSF46785">
    <property type="entry name" value="Winged helix' DNA-binding domain"/>
    <property type="match status" value="1"/>
</dbReference>
<dbReference type="PROSITE" id="PS50987">
    <property type="entry name" value="HTH_ARSR_2"/>
    <property type="match status" value="1"/>
</dbReference>
<keyword id="KW-0238">DNA-binding</keyword>
<keyword id="KW-1185">Reference proteome</keyword>
<keyword id="KW-0804">Transcription</keyword>
<keyword id="KW-0805">Transcription regulation</keyword>
<organism>
    <name type="scientific">Methanocaldococcus jannaschii (strain ATCC 43067 / DSM 2661 / JAL-1 / JCM 10045 / NBRC 100440)</name>
    <name type="common">Methanococcus jannaschii</name>
    <dbReference type="NCBI Taxonomy" id="243232"/>
    <lineage>
        <taxon>Archaea</taxon>
        <taxon>Methanobacteriati</taxon>
        <taxon>Methanobacteriota</taxon>
        <taxon>Methanomada group</taxon>
        <taxon>Methanococci</taxon>
        <taxon>Methanococcales</taxon>
        <taxon>Methanocaldococcaceae</taxon>
        <taxon>Methanocaldococcus</taxon>
    </lineage>
</organism>
<protein>
    <recommendedName>
        <fullName>Uncharacterized HTH-type transcriptional regulator MJ1325</fullName>
    </recommendedName>
</protein>
<accession>Q58721</accession>
<sequence length="89" mass="10292">MEKYEKAAEIFKAFGDPTRLMILKLLAENGSMCVCKIIDELKKPQPTISHHLNILKKAGIVKARKEGTWNFYYIVDDRVKEIIKLVDEL</sequence>
<proteinExistence type="predicted"/>